<proteinExistence type="evidence at protein level"/>
<evidence type="ECO:0000255" key="1">
    <source>
        <dbReference type="PROSITE-ProRule" id="PRU00159"/>
    </source>
</evidence>
<evidence type="ECO:0000255" key="2">
    <source>
        <dbReference type="PROSITE-ProRule" id="PRU10027"/>
    </source>
</evidence>
<evidence type="ECO:0000256" key="3">
    <source>
        <dbReference type="SAM" id="MobiDB-lite"/>
    </source>
</evidence>
<evidence type="ECO:0000269" key="4">
    <source>
    </source>
</evidence>
<evidence type="ECO:0000305" key="5"/>
<gene>
    <name type="primary">NEK5</name>
    <name type="synonym">NEK6</name>
    <name type="ordered locus">At3g44200</name>
    <name type="ORF">F26G5.150</name>
</gene>
<reference key="1">
    <citation type="journal article" date="2008" name="Plant J.">
        <title>Armadillo repeat-containing kinesins and a NIMA-related kinase are required for epidermal-cell morphogenesis in Arabidopsis.</title>
        <authorList>
            <person name="Sakai T."/>
            <person name="van der Honing H."/>
            <person name="Nishioka M."/>
            <person name="Uehara Y."/>
            <person name="Takahashi M."/>
            <person name="Fujisawa N."/>
            <person name="Saji K."/>
            <person name="Seki M."/>
            <person name="Shinozaki K."/>
            <person name="Jones M.A."/>
            <person name="Smirnoff N."/>
            <person name="Okada K."/>
            <person name="Wasteneys G.O."/>
        </authorList>
    </citation>
    <scope>NUCLEOTIDE SEQUENCE [MRNA]</scope>
    <scope>FUNCTION</scope>
    <scope>INTERACTION WITH ARK1; ARK2 AND ARK3</scope>
    <source>
        <strain>cv. Landsberg erecta</strain>
    </source>
</reference>
<reference key="2">
    <citation type="journal article" date="2000" name="Nature">
        <title>Sequence and analysis of chromosome 3 of the plant Arabidopsis thaliana.</title>
        <authorList>
            <person name="Salanoubat M."/>
            <person name="Lemcke K."/>
            <person name="Rieger M."/>
            <person name="Ansorge W."/>
            <person name="Unseld M."/>
            <person name="Fartmann B."/>
            <person name="Valle G."/>
            <person name="Bloecker H."/>
            <person name="Perez-Alonso M."/>
            <person name="Obermaier B."/>
            <person name="Delseny M."/>
            <person name="Boutry M."/>
            <person name="Grivell L.A."/>
            <person name="Mache R."/>
            <person name="Puigdomenech P."/>
            <person name="De Simone V."/>
            <person name="Choisne N."/>
            <person name="Artiguenave F."/>
            <person name="Robert C."/>
            <person name="Brottier P."/>
            <person name="Wincker P."/>
            <person name="Cattolico L."/>
            <person name="Weissenbach J."/>
            <person name="Saurin W."/>
            <person name="Quetier F."/>
            <person name="Schaefer M."/>
            <person name="Mueller-Auer S."/>
            <person name="Gabel C."/>
            <person name="Fuchs M."/>
            <person name="Benes V."/>
            <person name="Wurmbach E."/>
            <person name="Drzonek H."/>
            <person name="Erfle H."/>
            <person name="Jordan N."/>
            <person name="Bangert S."/>
            <person name="Wiedelmann R."/>
            <person name="Kranz H."/>
            <person name="Voss H."/>
            <person name="Holland R."/>
            <person name="Brandt P."/>
            <person name="Nyakatura G."/>
            <person name="Vezzi A."/>
            <person name="D'Angelo M."/>
            <person name="Pallavicini A."/>
            <person name="Toppo S."/>
            <person name="Simionati B."/>
            <person name="Conrad A."/>
            <person name="Hornischer K."/>
            <person name="Kauer G."/>
            <person name="Loehnert T.-H."/>
            <person name="Nordsiek G."/>
            <person name="Reichelt J."/>
            <person name="Scharfe M."/>
            <person name="Schoen O."/>
            <person name="Bargues M."/>
            <person name="Terol J."/>
            <person name="Climent J."/>
            <person name="Navarro P."/>
            <person name="Collado C."/>
            <person name="Perez-Perez A."/>
            <person name="Ottenwaelder B."/>
            <person name="Duchemin D."/>
            <person name="Cooke R."/>
            <person name="Laudie M."/>
            <person name="Berger-Llauro C."/>
            <person name="Purnelle B."/>
            <person name="Masuy D."/>
            <person name="de Haan M."/>
            <person name="Maarse A.C."/>
            <person name="Alcaraz J.-P."/>
            <person name="Cottet A."/>
            <person name="Casacuberta E."/>
            <person name="Monfort A."/>
            <person name="Argiriou A."/>
            <person name="Flores M."/>
            <person name="Liguori R."/>
            <person name="Vitale D."/>
            <person name="Mannhaupt G."/>
            <person name="Haase D."/>
            <person name="Schoof H."/>
            <person name="Rudd S."/>
            <person name="Zaccaria P."/>
            <person name="Mewes H.-W."/>
            <person name="Mayer K.F.X."/>
            <person name="Kaul S."/>
            <person name="Town C.D."/>
            <person name="Koo H.L."/>
            <person name="Tallon L.J."/>
            <person name="Jenkins J."/>
            <person name="Rooney T."/>
            <person name="Rizzo M."/>
            <person name="Walts A."/>
            <person name="Utterback T."/>
            <person name="Fujii C.Y."/>
            <person name="Shea T.P."/>
            <person name="Creasy T.H."/>
            <person name="Haas B."/>
            <person name="Maiti R."/>
            <person name="Wu D."/>
            <person name="Peterson J."/>
            <person name="Van Aken S."/>
            <person name="Pai G."/>
            <person name="Militscher J."/>
            <person name="Sellers P."/>
            <person name="Gill J.E."/>
            <person name="Feldblyum T.V."/>
            <person name="Preuss D."/>
            <person name="Lin X."/>
            <person name="Nierman W.C."/>
            <person name="Salzberg S.L."/>
            <person name="White O."/>
            <person name="Venter J.C."/>
            <person name="Fraser C.M."/>
            <person name="Kaneko T."/>
            <person name="Nakamura Y."/>
            <person name="Sato S."/>
            <person name="Kato T."/>
            <person name="Asamizu E."/>
            <person name="Sasamoto S."/>
            <person name="Kimura T."/>
            <person name="Idesawa K."/>
            <person name="Kawashima K."/>
            <person name="Kishida Y."/>
            <person name="Kiyokawa C."/>
            <person name="Kohara M."/>
            <person name="Matsumoto M."/>
            <person name="Matsuno A."/>
            <person name="Muraki A."/>
            <person name="Nakayama S."/>
            <person name="Nakazaki N."/>
            <person name="Shinpo S."/>
            <person name="Takeuchi C."/>
            <person name="Wada T."/>
            <person name="Watanabe A."/>
            <person name="Yamada M."/>
            <person name="Yasuda M."/>
            <person name="Tabata S."/>
        </authorList>
    </citation>
    <scope>NUCLEOTIDE SEQUENCE [LARGE SCALE GENOMIC DNA]</scope>
    <source>
        <strain>cv. Columbia</strain>
    </source>
</reference>
<reference key="3">
    <citation type="journal article" date="2017" name="Plant J.">
        <title>Araport11: a complete reannotation of the Arabidopsis thaliana reference genome.</title>
        <authorList>
            <person name="Cheng C.Y."/>
            <person name="Krishnakumar V."/>
            <person name="Chan A.P."/>
            <person name="Thibaud-Nissen F."/>
            <person name="Schobel S."/>
            <person name="Town C.D."/>
        </authorList>
    </citation>
    <scope>GENOME REANNOTATION</scope>
    <source>
        <strain>cv. Columbia</strain>
    </source>
</reference>
<reference key="4">
    <citation type="submission" date="2006-07" db="EMBL/GenBank/DDBJ databases">
        <title>Large-scale analysis of RIKEN Arabidopsis full-length (RAFL) cDNAs.</title>
        <authorList>
            <person name="Totoki Y."/>
            <person name="Seki M."/>
            <person name="Ishida J."/>
            <person name="Nakajima M."/>
            <person name="Enju A."/>
            <person name="Kamiya A."/>
            <person name="Narusaka M."/>
            <person name="Shin-i T."/>
            <person name="Nakagawa M."/>
            <person name="Sakamoto N."/>
            <person name="Oishi K."/>
            <person name="Kohara Y."/>
            <person name="Kobayashi M."/>
            <person name="Toyoda A."/>
            <person name="Sakaki Y."/>
            <person name="Sakurai T."/>
            <person name="Iida K."/>
            <person name="Akiyama K."/>
            <person name="Satou M."/>
            <person name="Toyoda T."/>
            <person name="Konagaya A."/>
            <person name="Carninci P."/>
            <person name="Kawai J."/>
            <person name="Hayashizaki Y."/>
            <person name="Shinozaki K."/>
        </authorList>
    </citation>
    <scope>NUCLEOTIDE SEQUENCE [LARGE SCALE MRNA]</scope>
    <source>
        <strain>cv. Columbia</strain>
    </source>
</reference>
<reference key="5">
    <citation type="journal article" date="2007" name="Plant J.">
        <title>Members of the plant NIMA-related kinases are involved in organ development and vascularization in poplar, Arabidopsis and rice.</title>
        <authorList>
            <person name="Vigneault F."/>
            <person name="Lachance D."/>
            <person name="Cloutier M."/>
            <person name="Pelletier G."/>
            <person name="Levasseur C."/>
            <person name="Seguin A."/>
        </authorList>
    </citation>
    <scope>GENE FAMILY</scope>
    <scope>NOMENCLATURE</scope>
</reference>
<protein>
    <recommendedName>
        <fullName>Serine/threonine-protein kinase Nek5</fullName>
        <ecNumber>2.7.11.1</ecNumber>
    </recommendedName>
    <alternativeName>
        <fullName>NimA-related protein kinase 5</fullName>
        <shortName>AtNEK6</shortName>
        <shortName>AtNek5</shortName>
    </alternativeName>
</protein>
<comment type="function">
    <text evidence="4">Involved in epidermal-cell morphogenesis in hypocotyls and roots. May act on the microtubule function. May have a secondary role in trichome branching.</text>
</comment>
<comment type="catalytic activity">
    <reaction>
        <text>L-seryl-[protein] + ATP = O-phospho-L-seryl-[protein] + ADP + H(+)</text>
        <dbReference type="Rhea" id="RHEA:17989"/>
        <dbReference type="Rhea" id="RHEA-COMP:9863"/>
        <dbReference type="Rhea" id="RHEA-COMP:11604"/>
        <dbReference type="ChEBI" id="CHEBI:15378"/>
        <dbReference type="ChEBI" id="CHEBI:29999"/>
        <dbReference type="ChEBI" id="CHEBI:30616"/>
        <dbReference type="ChEBI" id="CHEBI:83421"/>
        <dbReference type="ChEBI" id="CHEBI:456216"/>
        <dbReference type="EC" id="2.7.11.1"/>
    </reaction>
</comment>
<comment type="catalytic activity">
    <reaction>
        <text>L-threonyl-[protein] + ATP = O-phospho-L-threonyl-[protein] + ADP + H(+)</text>
        <dbReference type="Rhea" id="RHEA:46608"/>
        <dbReference type="Rhea" id="RHEA-COMP:11060"/>
        <dbReference type="Rhea" id="RHEA-COMP:11605"/>
        <dbReference type="ChEBI" id="CHEBI:15378"/>
        <dbReference type="ChEBI" id="CHEBI:30013"/>
        <dbReference type="ChEBI" id="CHEBI:30616"/>
        <dbReference type="ChEBI" id="CHEBI:61977"/>
        <dbReference type="ChEBI" id="CHEBI:456216"/>
        <dbReference type="EC" id="2.7.11.1"/>
    </reaction>
</comment>
<comment type="subunit">
    <text evidence="4">Interacts with ARK1, ARK2 and ARK3 (via C-terminus).</text>
</comment>
<comment type="similarity">
    <text evidence="5">Belongs to the protein kinase superfamily. NEK Ser/Thr protein kinase family. NIMA subfamily.</text>
</comment>
<comment type="sequence caution" evidence="5">
    <conflict type="erroneous gene model prediction">
        <sequence resource="EMBL-CDS" id="CAB88428"/>
    </conflict>
</comment>
<name>NEK5_ARATH</name>
<dbReference type="EC" id="2.7.11.1"/>
<dbReference type="EMBL" id="AB290931">
    <property type="protein sequence ID" value="BAF95588.1"/>
    <property type="molecule type" value="mRNA"/>
</dbReference>
<dbReference type="EMBL" id="AL353814">
    <property type="protein sequence ID" value="CAB88428.1"/>
    <property type="status" value="ALT_SEQ"/>
    <property type="molecule type" value="Genomic_DNA"/>
</dbReference>
<dbReference type="EMBL" id="CP002686">
    <property type="protein sequence ID" value="AEE77875.1"/>
    <property type="molecule type" value="Genomic_DNA"/>
</dbReference>
<dbReference type="EMBL" id="CP002686">
    <property type="protein sequence ID" value="ANM65741.1"/>
    <property type="molecule type" value="Genomic_DNA"/>
</dbReference>
<dbReference type="EMBL" id="AK229091">
    <property type="protein sequence ID" value="BAF00971.1"/>
    <property type="molecule type" value="mRNA"/>
</dbReference>
<dbReference type="PIR" id="T49136">
    <property type="entry name" value="T49136"/>
</dbReference>
<dbReference type="RefSeq" id="NP_001327688.1">
    <property type="nucleotide sequence ID" value="NM_001339123.1"/>
</dbReference>
<dbReference type="RefSeq" id="NP_190006.2">
    <property type="nucleotide sequence ID" value="NM_114288.4"/>
</dbReference>
<dbReference type="SMR" id="Q0WPH8"/>
<dbReference type="BioGRID" id="8862">
    <property type="interactions" value="6"/>
</dbReference>
<dbReference type="FunCoup" id="Q0WPH8">
    <property type="interactions" value="2395"/>
</dbReference>
<dbReference type="IntAct" id="Q0WPH8">
    <property type="interactions" value="1"/>
</dbReference>
<dbReference type="STRING" id="3702.Q0WPH8"/>
<dbReference type="GlyGen" id="Q0WPH8">
    <property type="glycosylation" value="1 site"/>
</dbReference>
<dbReference type="iPTMnet" id="Q0WPH8"/>
<dbReference type="PaxDb" id="3702-AT3G44200.1"/>
<dbReference type="ProteomicsDB" id="238853"/>
<dbReference type="EnsemblPlants" id="AT3G44200.1">
    <property type="protein sequence ID" value="AT3G44200.1"/>
    <property type="gene ID" value="AT3G44200"/>
</dbReference>
<dbReference type="EnsemblPlants" id="AT3G44200.2">
    <property type="protein sequence ID" value="AT3G44200.2"/>
    <property type="gene ID" value="AT3G44200"/>
</dbReference>
<dbReference type="GeneID" id="823542"/>
<dbReference type="Gramene" id="AT3G44200.1">
    <property type="protein sequence ID" value="AT3G44200.1"/>
    <property type="gene ID" value="AT3G44200"/>
</dbReference>
<dbReference type="Gramene" id="AT3G44200.2">
    <property type="protein sequence ID" value="AT3G44200.2"/>
    <property type="gene ID" value="AT3G44200"/>
</dbReference>
<dbReference type="KEGG" id="ath:AT3G44200"/>
<dbReference type="Araport" id="AT3G44200"/>
<dbReference type="TAIR" id="AT3G44200">
    <property type="gene designation" value="NEK6"/>
</dbReference>
<dbReference type="eggNOG" id="KOG0589">
    <property type="taxonomic scope" value="Eukaryota"/>
</dbReference>
<dbReference type="HOGENOM" id="CLU_000288_128_0_1"/>
<dbReference type="InParanoid" id="Q0WPH8"/>
<dbReference type="OMA" id="IMRYNAR"/>
<dbReference type="OrthoDB" id="248923at2759"/>
<dbReference type="PhylomeDB" id="Q0WPH8"/>
<dbReference type="PRO" id="PR:Q0WPH8"/>
<dbReference type="Proteomes" id="UP000006548">
    <property type="component" value="Chromosome 3"/>
</dbReference>
<dbReference type="ExpressionAtlas" id="Q0WPH8">
    <property type="expression patterns" value="baseline and differential"/>
</dbReference>
<dbReference type="GO" id="GO:0055028">
    <property type="term" value="C:cortical microtubule"/>
    <property type="evidence" value="ECO:0000314"/>
    <property type="project" value="TAIR"/>
</dbReference>
<dbReference type="GO" id="GO:0005524">
    <property type="term" value="F:ATP binding"/>
    <property type="evidence" value="ECO:0007669"/>
    <property type="project" value="UniProtKB-KW"/>
</dbReference>
<dbReference type="GO" id="GO:0004672">
    <property type="term" value="F:protein kinase activity"/>
    <property type="evidence" value="ECO:0000314"/>
    <property type="project" value="TAIR"/>
</dbReference>
<dbReference type="GO" id="GO:0106310">
    <property type="term" value="F:protein serine kinase activity"/>
    <property type="evidence" value="ECO:0007669"/>
    <property type="project" value="RHEA"/>
</dbReference>
<dbReference type="GO" id="GO:0004674">
    <property type="term" value="F:protein serine/threonine kinase activity"/>
    <property type="evidence" value="ECO:0007669"/>
    <property type="project" value="UniProtKB-KW"/>
</dbReference>
<dbReference type="GO" id="GO:0043622">
    <property type="term" value="P:cortical microtubule organization"/>
    <property type="evidence" value="ECO:0000315"/>
    <property type="project" value="TAIR"/>
</dbReference>
<dbReference type="GO" id="GO:0009913">
    <property type="term" value="P:epidermal cell differentiation"/>
    <property type="evidence" value="ECO:0000315"/>
    <property type="project" value="TAIR"/>
</dbReference>
<dbReference type="GO" id="GO:0007017">
    <property type="term" value="P:microtubule-based process"/>
    <property type="evidence" value="ECO:0000315"/>
    <property type="project" value="TAIR"/>
</dbReference>
<dbReference type="CDD" id="cd08215">
    <property type="entry name" value="STKc_Nek"/>
    <property type="match status" value="1"/>
</dbReference>
<dbReference type="FunFam" id="3.30.200.20:FF:000108">
    <property type="entry name" value="Serine/threonine-protein kinase Nek2"/>
    <property type="match status" value="1"/>
</dbReference>
<dbReference type="FunFam" id="1.10.510.10:FF:000504">
    <property type="entry name" value="Serine/threonine-protein kinase Nek5"/>
    <property type="match status" value="1"/>
</dbReference>
<dbReference type="Gene3D" id="3.30.200.20">
    <property type="entry name" value="Phosphorylase Kinase, domain 1"/>
    <property type="match status" value="1"/>
</dbReference>
<dbReference type="Gene3D" id="1.10.510.10">
    <property type="entry name" value="Transferase(Phosphotransferase) domain 1"/>
    <property type="match status" value="1"/>
</dbReference>
<dbReference type="InterPro" id="IPR011009">
    <property type="entry name" value="Kinase-like_dom_sf"/>
</dbReference>
<dbReference type="InterPro" id="IPR050660">
    <property type="entry name" value="NEK_Ser/Thr_kinase"/>
</dbReference>
<dbReference type="InterPro" id="IPR000719">
    <property type="entry name" value="Prot_kinase_dom"/>
</dbReference>
<dbReference type="InterPro" id="IPR017441">
    <property type="entry name" value="Protein_kinase_ATP_BS"/>
</dbReference>
<dbReference type="InterPro" id="IPR008271">
    <property type="entry name" value="Ser/Thr_kinase_AS"/>
</dbReference>
<dbReference type="PANTHER" id="PTHR43671">
    <property type="entry name" value="SERINE/THREONINE-PROTEIN KINASE NEK"/>
    <property type="match status" value="1"/>
</dbReference>
<dbReference type="PANTHER" id="PTHR43671:SF98">
    <property type="entry name" value="SERINE_THREONINE-PROTEIN KINASE NEK11"/>
    <property type="match status" value="1"/>
</dbReference>
<dbReference type="Pfam" id="PF00069">
    <property type="entry name" value="Pkinase"/>
    <property type="match status" value="1"/>
</dbReference>
<dbReference type="SMART" id="SM00220">
    <property type="entry name" value="S_TKc"/>
    <property type="match status" value="1"/>
</dbReference>
<dbReference type="SUPFAM" id="SSF56112">
    <property type="entry name" value="Protein kinase-like (PK-like)"/>
    <property type="match status" value="1"/>
</dbReference>
<dbReference type="PROSITE" id="PS00107">
    <property type="entry name" value="PROTEIN_KINASE_ATP"/>
    <property type="match status" value="1"/>
</dbReference>
<dbReference type="PROSITE" id="PS50011">
    <property type="entry name" value="PROTEIN_KINASE_DOM"/>
    <property type="match status" value="1"/>
</dbReference>
<dbReference type="PROSITE" id="PS00108">
    <property type="entry name" value="PROTEIN_KINASE_ST"/>
    <property type="match status" value="1"/>
</dbReference>
<keyword id="KW-0067">ATP-binding</keyword>
<keyword id="KW-0418">Kinase</keyword>
<keyword id="KW-0547">Nucleotide-binding</keyword>
<keyword id="KW-1185">Reference proteome</keyword>
<keyword id="KW-0723">Serine/threonine-protein kinase</keyword>
<keyword id="KW-0808">Transferase</keyword>
<sequence>MESRMDQYELMEQIGRGAFGAAILVHHKAERKKYVLKKIRLARQTERCRRSAHQEMSLIARVQHPYIVEFKEAWVEKGCYVCIVTGYCEGGDMAELMKKSNGVYFPEEKLCKWFTQLLLAVEYLHSNYVLHRDLKCSNIFLTKDQDVRLGDFGLAKTLKADDLTSSVVGTPNYMCPELLADIPYGFKSDIWSLGCCIYEMAAYRPAFKAFDMAGLISKVNRSSIGPLPPCYSPSLKALIKGMLRKNPEYRPNASEILKHPYLQPYVEQYRPTLSAASITPEKPLNSREGRRSMAESQNSNSSSEKDNFYVSDKNIRYVVPSNGNKVTETDSGFVDDEDILDHVQQSAENGNLQSVSATKPDGHGILKPVHSDQRPDVIQPRHPKTIRNIMMVLKEEKARENGSPMRSNRSRPSSVPTQKNNVETPSKIPKLGDIAHSSKTNASTPIPPSKLASDSARTPGSFPPKHHMPVIDSSPKLKPRNDRISPSPAAKHEAEEAMSVKRRQRTPPTLPRRTSLIAHQSRQLGADISNMAAKETAKLHPSVPSESETNSHQSRVHASPVSTTPEPKRTSVGSAKGMQSESSNSISSSLSMQAFELCDDASTPYIDMTEHTTPDDHRRSCHSEYSYSFPDISSEMMIRRDEHSTSMRLTEIPDSVSGVQNTIAHHQPEREQGSCPTVLKDDSPATLQSYEPNTSQHQHGDDKFTVKEFVSSVPGPAPLPLHVEPSHQVNSHSDNKTSVMSQNSALEKNNSHSHPHPVVDDVIHVIRHSSFRVGSDQPVMESVEVGVQNVDMGKLINVVRDEMEVRKGATPSESPTTRSIISEPDSRTEPRPKEPDPITNYSETKSFNSCSDSSPAETRTNSFVPEEETTPTPPVKETLDIKSFRQRAEALEGLLELSADLLEQSRLEELAIVLQPFGKNKVSPRETAIWLAKSLKGMMIEDINNNNSSGSSRNCS</sequence>
<feature type="chain" id="PRO_0000314041" description="Serine/threonine-protein kinase Nek5">
    <location>
        <begin position="1"/>
        <end position="956"/>
    </location>
</feature>
<feature type="domain" description="Protein kinase" evidence="1">
    <location>
        <begin position="8"/>
        <end position="262"/>
    </location>
</feature>
<feature type="region of interest" description="Disordered" evidence="3">
    <location>
        <begin position="276"/>
        <end position="307"/>
    </location>
</feature>
<feature type="region of interest" description="Disordered" evidence="3">
    <location>
        <begin position="349"/>
        <end position="379"/>
    </location>
</feature>
<feature type="region of interest" description="Disordered" evidence="3">
    <location>
        <begin position="397"/>
        <end position="509"/>
    </location>
</feature>
<feature type="region of interest" description="Disordered" evidence="3">
    <location>
        <begin position="535"/>
        <end position="588"/>
    </location>
</feature>
<feature type="region of interest" description="Disordered" evidence="3">
    <location>
        <begin position="666"/>
        <end position="701"/>
    </location>
</feature>
<feature type="region of interest" description="Disordered" evidence="3">
    <location>
        <begin position="715"/>
        <end position="757"/>
    </location>
</feature>
<feature type="region of interest" description="Disordered" evidence="3">
    <location>
        <begin position="803"/>
        <end position="876"/>
    </location>
</feature>
<feature type="compositionally biased region" description="Basic and acidic residues" evidence="3">
    <location>
        <begin position="284"/>
        <end position="293"/>
    </location>
</feature>
<feature type="compositionally biased region" description="Basic and acidic residues" evidence="3">
    <location>
        <begin position="360"/>
        <end position="375"/>
    </location>
</feature>
<feature type="compositionally biased region" description="Low complexity" evidence="3">
    <location>
        <begin position="403"/>
        <end position="416"/>
    </location>
</feature>
<feature type="compositionally biased region" description="Basic and acidic residues" evidence="3">
    <location>
        <begin position="490"/>
        <end position="499"/>
    </location>
</feature>
<feature type="compositionally biased region" description="Polar residues" evidence="3">
    <location>
        <begin position="544"/>
        <end position="553"/>
    </location>
</feature>
<feature type="compositionally biased region" description="Polar residues" evidence="3">
    <location>
        <begin position="560"/>
        <end position="579"/>
    </location>
</feature>
<feature type="compositionally biased region" description="Polar residues" evidence="3">
    <location>
        <begin position="685"/>
        <end position="697"/>
    </location>
</feature>
<feature type="compositionally biased region" description="Polar residues" evidence="3">
    <location>
        <begin position="727"/>
        <end position="748"/>
    </location>
</feature>
<feature type="compositionally biased region" description="Polar residues" evidence="3">
    <location>
        <begin position="811"/>
        <end position="820"/>
    </location>
</feature>
<feature type="compositionally biased region" description="Basic and acidic residues" evidence="3">
    <location>
        <begin position="824"/>
        <end position="836"/>
    </location>
</feature>
<feature type="compositionally biased region" description="Polar residues" evidence="3">
    <location>
        <begin position="839"/>
        <end position="863"/>
    </location>
</feature>
<feature type="active site" description="Proton acceptor" evidence="1 2">
    <location>
        <position position="133"/>
    </location>
</feature>
<feature type="binding site" evidence="1">
    <location>
        <begin position="14"/>
        <end position="22"/>
    </location>
    <ligand>
        <name>ATP</name>
        <dbReference type="ChEBI" id="CHEBI:30616"/>
    </ligand>
</feature>
<feature type="binding site" evidence="1">
    <location>
        <position position="37"/>
    </location>
    <ligand>
        <name>ATP</name>
        <dbReference type="ChEBI" id="CHEBI:30616"/>
    </ligand>
</feature>
<feature type="sequence conflict" description="In Ref. 1; BAF95588." evidence="5" ref="1">
    <original>A</original>
    <variation>T</variation>
    <location>
        <position position="347"/>
    </location>
</feature>
<feature type="sequence conflict" description="In Ref. 1; BAF95588." evidence="5" ref="1">
    <original>V</original>
    <variation>I</variation>
    <location>
        <position position="723"/>
    </location>
</feature>
<accession>Q0WPH8</accession>
<accession>A9CP44</accession>
<accession>Q9LXP3</accession>
<organism>
    <name type="scientific">Arabidopsis thaliana</name>
    <name type="common">Mouse-ear cress</name>
    <dbReference type="NCBI Taxonomy" id="3702"/>
    <lineage>
        <taxon>Eukaryota</taxon>
        <taxon>Viridiplantae</taxon>
        <taxon>Streptophyta</taxon>
        <taxon>Embryophyta</taxon>
        <taxon>Tracheophyta</taxon>
        <taxon>Spermatophyta</taxon>
        <taxon>Magnoliopsida</taxon>
        <taxon>eudicotyledons</taxon>
        <taxon>Gunneridae</taxon>
        <taxon>Pentapetalae</taxon>
        <taxon>rosids</taxon>
        <taxon>malvids</taxon>
        <taxon>Brassicales</taxon>
        <taxon>Brassicaceae</taxon>
        <taxon>Camelineae</taxon>
        <taxon>Arabidopsis</taxon>
    </lineage>
</organism>